<feature type="chain" id="PRO_0000310770" description="RNA N(6)-adenosine-methyltransferase mettl16">
    <location>
        <begin position="1"/>
        <end position="471"/>
    </location>
</feature>
<feature type="region of interest" description="RNA-binding" evidence="1">
    <location>
        <begin position="17"/>
        <end position="20"/>
    </location>
</feature>
<feature type="region of interest" description="K-loop" evidence="1">
    <location>
        <begin position="159"/>
        <end position="163"/>
    </location>
</feature>
<feature type="region of interest" description="RNA-binding" evidence="1">
    <location>
        <begin position="194"/>
        <end position="206"/>
    </location>
</feature>
<feature type="region of interest" description="RNA-binding" evidence="1">
    <location>
        <begin position="245"/>
        <end position="249"/>
    </location>
</feature>
<feature type="region of interest" description="RNA-binding" evidence="1">
    <location>
        <begin position="272"/>
        <end position="278"/>
    </location>
</feature>
<feature type="region of interest" description="VCR 1" evidence="1">
    <location>
        <begin position="284"/>
        <end position="390"/>
    </location>
</feature>
<feature type="region of interest" description="Disordered" evidence="2">
    <location>
        <begin position="375"/>
        <end position="412"/>
    </location>
</feature>
<feature type="region of interest" description="VCR 2" evidence="1">
    <location>
        <begin position="421"/>
        <end position="470"/>
    </location>
</feature>
<feature type="binding site" evidence="1">
    <location>
        <position position="82"/>
    </location>
    <ligand>
        <name>S-adenosyl-L-methionine</name>
        <dbReference type="ChEBI" id="CHEBI:59789"/>
    </ligand>
</feature>
<feature type="binding site" evidence="1">
    <location>
        <position position="106"/>
    </location>
    <ligand>
        <name>S-adenosyl-L-methionine</name>
        <dbReference type="ChEBI" id="CHEBI:59789"/>
    </ligand>
</feature>
<feature type="binding site" evidence="1">
    <location>
        <position position="110"/>
    </location>
    <ligand>
        <name>S-adenosyl-L-methionine</name>
        <dbReference type="ChEBI" id="CHEBI:59789"/>
    </ligand>
</feature>
<feature type="binding site" evidence="1">
    <location>
        <position position="129"/>
    </location>
    <ligand>
        <name>S-adenosyl-L-methionine</name>
        <dbReference type="ChEBI" id="CHEBI:59789"/>
    </ligand>
</feature>
<feature type="binding site" evidence="1">
    <location>
        <position position="160"/>
    </location>
    <ligand>
        <name>S-adenosyl-L-methionine</name>
        <dbReference type="ChEBI" id="CHEBI:59789"/>
    </ligand>
</feature>
<feature type="binding site" evidence="1">
    <location>
        <position position="179"/>
    </location>
    <ligand>
        <name>S-adenosyl-L-methionine</name>
        <dbReference type="ChEBI" id="CHEBI:59789"/>
    </ligand>
</feature>
<protein>
    <recommendedName>
        <fullName evidence="3">RNA N(6)-adenosine-methyltransferase mettl16</fullName>
        <ecNumber evidence="1">2.1.1.348</ecNumber>
    </recommendedName>
    <alternativeName>
        <fullName>Methyltransferase 10 domain-containing protein</fullName>
    </alternativeName>
    <alternativeName>
        <fullName>Methyltransferase-like protein 16</fullName>
    </alternativeName>
    <alternativeName>
        <fullName evidence="1">U6 small nuclear RNA (adenine-(43)-N(6))-methyltransferase</fullName>
        <ecNumber evidence="1">2.1.1.346</ecNumber>
    </alternativeName>
</protein>
<sequence length="471" mass="53621">MALNKSMHPRNRYKDKPPDFVYLASKYPEFQKHVQTTLTGRVTLNFKDPEAVRALTCTLLKEDFGLTIEIPLERLIPTVPLRLNYIHWVEDLIGGQGNPQRGIDIGTGASCIYPLLGATMNGWFFLATEVDDICFNYAKKNVEQNHLAELIKVVKVPQKTLLMDALKEESIVYDFCMCNPPFFANQLEAKGVNSRNSRRPPPSSINTGGVTEIMAEGGELEFVKRVIHDSLQLKKRLRWYSCMLGKKCSLAPLKDELRKQGVAKVTHTEFCQGRTMRWALAWSFYDDVPVPSPPCKKRKLEKARKPLTFTVLKATVAELQAQTPHSSPTESVSAWLENILTDLKVLHKRVPGGEVELSLFLTAVENTWIHSRQKRREQGRHLRELPRAQEPPSEETSVTEQQQQPDIPPESPANAEALQHFLFKCLVNVKQEEEKDVLVEMHWVEGQNKDLMNQLCTCLKNALFRQVAKPT</sequence>
<accession>Q6DC64</accession>
<proteinExistence type="evidence at transcript level"/>
<evidence type="ECO:0000250" key="1">
    <source>
        <dbReference type="UniProtKB" id="Q86W50"/>
    </source>
</evidence>
<evidence type="ECO:0000256" key="2">
    <source>
        <dbReference type="SAM" id="MobiDB-lite"/>
    </source>
</evidence>
<evidence type="ECO:0000305" key="3"/>
<dbReference type="EC" id="2.1.1.348" evidence="1"/>
<dbReference type="EC" id="2.1.1.346" evidence="1"/>
<dbReference type="EMBL" id="BC078220">
    <property type="protein sequence ID" value="AAH78220.1"/>
    <property type="molecule type" value="mRNA"/>
</dbReference>
<dbReference type="RefSeq" id="NP_001003611.1">
    <property type="nucleotide sequence ID" value="NM_001003611.1"/>
</dbReference>
<dbReference type="SMR" id="Q6DC64"/>
<dbReference type="FunCoup" id="Q6DC64">
    <property type="interactions" value="2847"/>
</dbReference>
<dbReference type="STRING" id="7955.ENSDARP00000072692"/>
<dbReference type="PaxDb" id="7955-ENSDARP00000072692"/>
<dbReference type="GeneID" id="445217"/>
<dbReference type="KEGG" id="dre:445217"/>
<dbReference type="AGR" id="ZFIN:ZDB-GENE-040801-130"/>
<dbReference type="CTD" id="79066"/>
<dbReference type="ZFIN" id="ZDB-GENE-040801-130">
    <property type="gene designation" value="mettl16"/>
</dbReference>
<dbReference type="eggNOG" id="KOG2912">
    <property type="taxonomic scope" value="Eukaryota"/>
</dbReference>
<dbReference type="InParanoid" id="Q6DC64"/>
<dbReference type="OrthoDB" id="514248at2759"/>
<dbReference type="PhylomeDB" id="Q6DC64"/>
<dbReference type="PRO" id="PR:Q6DC64"/>
<dbReference type="Proteomes" id="UP000000437">
    <property type="component" value="Chromosome 15"/>
</dbReference>
<dbReference type="GO" id="GO:0005737">
    <property type="term" value="C:cytoplasm"/>
    <property type="evidence" value="ECO:0000250"/>
    <property type="project" value="UniProtKB"/>
</dbReference>
<dbReference type="GO" id="GO:0005634">
    <property type="term" value="C:nucleus"/>
    <property type="evidence" value="ECO:0000250"/>
    <property type="project" value="UniProtKB"/>
</dbReference>
<dbReference type="GO" id="GO:0001734">
    <property type="term" value="F:mRNA m(6)A methyltransferase activity"/>
    <property type="evidence" value="ECO:0000250"/>
    <property type="project" value="UniProtKB"/>
</dbReference>
<dbReference type="GO" id="GO:0003723">
    <property type="term" value="F:RNA binding"/>
    <property type="evidence" value="ECO:0000250"/>
    <property type="project" value="UniProtKB"/>
</dbReference>
<dbReference type="GO" id="GO:0035613">
    <property type="term" value="F:RNA stem-loop binding"/>
    <property type="evidence" value="ECO:0000250"/>
    <property type="project" value="UniProtKB"/>
</dbReference>
<dbReference type="GO" id="GO:0120048">
    <property type="term" value="F:U6 snRNA (adenine-(43)-N(6))-methyltransferase activity"/>
    <property type="evidence" value="ECO:0000250"/>
    <property type="project" value="UniProtKB"/>
</dbReference>
<dbReference type="GO" id="GO:0030629">
    <property type="term" value="F:U6 snRNA 3'-end binding"/>
    <property type="evidence" value="ECO:0000250"/>
    <property type="project" value="UniProtKB"/>
</dbReference>
<dbReference type="GO" id="GO:0006402">
    <property type="term" value="P:mRNA catabolic process"/>
    <property type="evidence" value="ECO:0000250"/>
    <property type="project" value="UniProtKB"/>
</dbReference>
<dbReference type="GO" id="GO:0061157">
    <property type="term" value="P:mRNA destabilization"/>
    <property type="evidence" value="ECO:0000250"/>
    <property type="project" value="UniProtKB"/>
</dbReference>
<dbReference type="GO" id="GO:0006397">
    <property type="term" value="P:mRNA processing"/>
    <property type="evidence" value="ECO:0000250"/>
    <property type="project" value="UniProtKB"/>
</dbReference>
<dbReference type="GO" id="GO:0010608">
    <property type="term" value="P:post-transcriptional regulation of gene expression"/>
    <property type="evidence" value="ECO:0000250"/>
    <property type="project" value="UniProtKB"/>
</dbReference>
<dbReference type="GO" id="GO:0048024">
    <property type="term" value="P:regulation of mRNA splicing, via spliceosome"/>
    <property type="evidence" value="ECO:0000250"/>
    <property type="project" value="UniProtKB"/>
</dbReference>
<dbReference type="GO" id="GO:0070475">
    <property type="term" value="P:rRNA base methylation"/>
    <property type="evidence" value="ECO:0000318"/>
    <property type="project" value="GO_Central"/>
</dbReference>
<dbReference type="GO" id="GO:0006556">
    <property type="term" value="P:S-adenosylmethionine biosynthetic process"/>
    <property type="evidence" value="ECO:0000250"/>
    <property type="project" value="UniProtKB"/>
</dbReference>
<dbReference type="GO" id="GO:0120049">
    <property type="term" value="P:snRNA (adenine-N6)-methylation"/>
    <property type="evidence" value="ECO:0000250"/>
    <property type="project" value="UniProtKB"/>
</dbReference>
<dbReference type="CDD" id="cd02440">
    <property type="entry name" value="AdoMet_MTases"/>
    <property type="match status" value="1"/>
</dbReference>
<dbReference type="FunFam" id="3.40.50.150:FF:000062">
    <property type="entry name" value="U6 small nuclear RNA (adenine-(43)-N(6))-methyltransferase"/>
    <property type="match status" value="1"/>
</dbReference>
<dbReference type="Gene3D" id="3.40.50.150">
    <property type="entry name" value="Vaccinia Virus protein VP39"/>
    <property type="match status" value="1"/>
</dbReference>
<dbReference type="InterPro" id="IPR017182">
    <property type="entry name" value="METTL16/PsiM"/>
</dbReference>
<dbReference type="InterPro" id="IPR010286">
    <property type="entry name" value="METTL16/RlmF"/>
</dbReference>
<dbReference type="InterPro" id="IPR029063">
    <property type="entry name" value="SAM-dependent_MTases_sf"/>
</dbReference>
<dbReference type="PANTHER" id="PTHR13393:SF0">
    <property type="entry name" value="RNA N6-ADENOSINE-METHYLTRANSFERASE METTL16"/>
    <property type="match status" value="1"/>
</dbReference>
<dbReference type="PANTHER" id="PTHR13393">
    <property type="entry name" value="SAM-DEPENDENT METHYLTRANSFERASE"/>
    <property type="match status" value="1"/>
</dbReference>
<dbReference type="Pfam" id="PF05971">
    <property type="entry name" value="Methyltransf_10"/>
    <property type="match status" value="1"/>
</dbReference>
<dbReference type="PIRSF" id="PIRSF037350">
    <property type="entry name" value="Mtase_ZK1128_prd"/>
    <property type="match status" value="1"/>
</dbReference>
<dbReference type="SUPFAM" id="SSF53335">
    <property type="entry name" value="S-adenosyl-L-methionine-dependent methyltransferases"/>
    <property type="match status" value="1"/>
</dbReference>
<gene>
    <name type="primary">mettl16</name>
    <name type="synonym">mett10d</name>
    <name type="ORF">zgc:100981</name>
</gene>
<keyword id="KW-0963">Cytoplasm</keyword>
<keyword id="KW-0489">Methyltransferase</keyword>
<keyword id="KW-0539">Nucleus</keyword>
<keyword id="KW-1185">Reference proteome</keyword>
<keyword id="KW-0694">RNA-binding</keyword>
<keyword id="KW-0949">S-adenosyl-L-methionine</keyword>
<keyword id="KW-0808">Transferase</keyword>
<name>MET16_DANRE</name>
<reference key="1">
    <citation type="submission" date="2004-07" db="EMBL/GenBank/DDBJ databases">
        <authorList>
            <consortium name="NIH - Zebrafish Gene Collection (ZGC) project"/>
        </authorList>
    </citation>
    <scope>NUCLEOTIDE SEQUENCE [LARGE SCALE MRNA]</scope>
    <source>
        <tissue>Embryo</tissue>
    </source>
</reference>
<organism>
    <name type="scientific">Danio rerio</name>
    <name type="common">Zebrafish</name>
    <name type="synonym">Brachydanio rerio</name>
    <dbReference type="NCBI Taxonomy" id="7955"/>
    <lineage>
        <taxon>Eukaryota</taxon>
        <taxon>Metazoa</taxon>
        <taxon>Chordata</taxon>
        <taxon>Craniata</taxon>
        <taxon>Vertebrata</taxon>
        <taxon>Euteleostomi</taxon>
        <taxon>Actinopterygii</taxon>
        <taxon>Neopterygii</taxon>
        <taxon>Teleostei</taxon>
        <taxon>Ostariophysi</taxon>
        <taxon>Cypriniformes</taxon>
        <taxon>Danionidae</taxon>
        <taxon>Danioninae</taxon>
        <taxon>Danio</taxon>
    </lineage>
</organism>
<comment type="function">
    <text evidence="1">RNA N6-methyltransferase that methylates adenosine residues at the N(6) position of a subset of RNAs and is involved in S-adenosyl-L-methionine homeostasis by regulating expression of MAT2A transcripts. Able to N6-methylate a subset of mRNAs and U6 small nuclear RNAs (U6 snRNAs). In contrast to the METTL3-METTL14 heterodimer, only able to methylate a limited number of RNAs: requires both a 5'UACAGAGAA-3' nonamer sequence and a specific RNA structure. Plays a key role in S-adenosyl-L-methionine homeostasis by mediating N6-methylation of MAT2A mRNAs, altering splicing of MAT2A transcripts: in presence of S-adenosyl-L-methionine, binds the 3'-UTR region of MAT2A mRNA and specifically N6-methylates the first hairpin of MAT2A mRNA, impairing MAT2A splicing and protein expression. In S-adenosyl-L-methionine-limiting conditions, binds the 3'-UTR region of MAT2A mRNA but stalls due to the lack of a methyl donor, preventing N6-methylation and promoting expression of MAT2A. In addition to mRNAs, also able to mediate N6-methylation of U6 small nuclear RNA (U6 snRNA): specifically N6-methylates adenine in position 43 of U6 snRNAs.</text>
</comment>
<comment type="catalytic activity">
    <reaction evidence="1">
        <text>adenosine in U6 snRNA + S-adenosyl-L-methionine = N(6)-methyladenosine in U6 snRNA + S-adenosyl-L-homocysteine + H(+)</text>
        <dbReference type="Rhea" id="RHEA:52808"/>
        <dbReference type="Rhea" id="RHEA-COMP:13573"/>
        <dbReference type="Rhea" id="RHEA-COMP:13574"/>
        <dbReference type="ChEBI" id="CHEBI:15378"/>
        <dbReference type="ChEBI" id="CHEBI:57856"/>
        <dbReference type="ChEBI" id="CHEBI:59789"/>
        <dbReference type="ChEBI" id="CHEBI:74411"/>
        <dbReference type="ChEBI" id="CHEBI:74449"/>
        <dbReference type="EC" id="2.1.1.346"/>
    </reaction>
</comment>
<comment type="catalytic activity">
    <reaction evidence="1">
        <text>an adenosine in mRNA + S-adenosyl-L-methionine = an N(6)-methyladenosine in mRNA + S-adenosyl-L-homocysteine + H(+)</text>
        <dbReference type="Rhea" id="RHEA:55584"/>
        <dbReference type="Rhea" id="RHEA-COMP:12414"/>
        <dbReference type="Rhea" id="RHEA-COMP:12417"/>
        <dbReference type="ChEBI" id="CHEBI:15378"/>
        <dbReference type="ChEBI" id="CHEBI:57856"/>
        <dbReference type="ChEBI" id="CHEBI:59789"/>
        <dbReference type="ChEBI" id="CHEBI:74411"/>
        <dbReference type="ChEBI" id="CHEBI:74449"/>
        <dbReference type="EC" id="2.1.1.348"/>
    </reaction>
</comment>
<comment type="activity regulation">
    <text evidence="1">Methyltransferase activity is autoinhibited by the K-loop region that blocks S-adenosyl-L-methionine-binding. Upon activation, K-loop changes conformation, allowing S-adenosyl-L-methionine-binding and subsequent methyltransferase activity. mRNA N6-adenosine-methyltransferase activity is inhibited by zinc.</text>
</comment>
<comment type="subcellular location">
    <subcellularLocation>
        <location evidence="1">Nucleus</location>
    </subcellularLocation>
    <subcellularLocation>
        <location evidence="1">Cytoplasm</location>
    </subcellularLocation>
</comment>
<comment type="domain">
    <text evidence="1">The VCR (vertebrate conserved) regions bind the first hairpin of MAT2A mRNAs. The VCR regions interact with the internal stem-loop within U6 snRNAs, inducing the conformational rearrangement of the A43-containing region of U6 snRNA, thereby modifying the RNA structure to become suitable for productive catalysis by the methyltransferase region.</text>
</comment>
<comment type="domain">
    <text evidence="1">The K-loop region occludes the S-adenosyl-L-methionine-binding pocket. Upon activation, conformation of the K-loop changes, allowing S-adenosyl-L-methionine-binding.</text>
</comment>
<comment type="similarity">
    <text evidence="3">Belongs to the methyltransferase superfamily. METTL16/RlmF family.</text>
</comment>